<proteinExistence type="inferred from homology"/>
<dbReference type="EC" id="3.5.3.6" evidence="1"/>
<dbReference type="EMBL" id="CP000416">
    <property type="protein sequence ID" value="ABJ65084.1"/>
    <property type="molecule type" value="Genomic_DNA"/>
</dbReference>
<dbReference type="RefSeq" id="WP_011668704.1">
    <property type="nucleotide sequence ID" value="NC_008497.1"/>
</dbReference>
<dbReference type="SMR" id="Q03NY8"/>
<dbReference type="STRING" id="387344.LVIS_2027"/>
<dbReference type="GeneID" id="56993900"/>
<dbReference type="KEGG" id="lbr:LVIS_2027"/>
<dbReference type="eggNOG" id="COG2235">
    <property type="taxonomic scope" value="Bacteria"/>
</dbReference>
<dbReference type="HOGENOM" id="CLU_052662_0_1_9"/>
<dbReference type="UniPathway" id="UPA00254">
    <property type="reaction ID" value="UER00364"/>
</dbReference>
<dbReference type="Proteomes" id="UP000001652">
    <property type="component" value="Chromosome"/>
</dbReference>
<dbReference type="GO" id="GO:0005737">
    <property type="term" value="C:cytoplasm"/>
    <property type="evidence" value="ECO:0007669"/>
    <property type="project" value="UniProtKB-SubCell"/>
</dbReference>
<dbReference type="GO" id="GO:0016990">
    <property type="term" value="F:arginine deiminase activity"/>
    <property type="evidence" value="ECO:0007669"/>
    <property type="project" value="UniProtKB-UniRule"/>
</dbReference>
<dbReference type="GO" id="GO:0019547">
    <property type="term" value="P:arginine catabolic process to ornithine"/>
    <property type="evidence" value="ECO:0007669"/>
    <property type="project" value="UniProtKB-UniRule"/>
</dbReference>
<dbReference type="GO" id="GO:0019546">
    <property type="term" value="P:arginine deiminase pathway"/>
    <property type="evidence" value="ECO:0007669"/>
    <property type="project" value="TreeGrafter"/>
</dbReference>
<dbReference type="Gene3D" id="1.10.3930.10">
    <property type="entry name" value="Arginine deiminase"/>
    <property type="match status" value="1"/>
</dbReference>
<dbReference type="Gene3D" id="3.75.10.10">
    <property type="entry name" value="L-arginine/glycine Amidinotransferase, Chain A"/>
    <property type="match status" value="1"/>
</dbReference>
<dbReference type="HAMAP" id="MF_00242">
    <property type="entry name" value="Arg_deiminase"/>
    <property type="match status" value="1"/>
</dbReference>
<dbReference type="InterPro" id="IPR003876">
    <property type="entry name" value="Arg_deiminase"/>
</dbReference>
<dbReference type="NCBIfam" id="TIGR01078">
    <property type="entry name" value="arcA"/>
    <property type="match status" value="1"/>
</dbReference>
<dbReference type="NCBIfam" id="NF002381">
    <property type="entry name" value="PRK01388.1"/>
    <property type="match status" value="1"/>
</dbReference>
<dbReference type="PANTHER" id="PTHR47271">
    <property type="entry name" value="ARGININE DEIMINASE"/>
    <property type="match status" value="1"/>
</dbReference>
<dbReference type="PANTHER" id="PTHR47271:SF2">
    <property type="entry name" value="ARGININE DEIMINASE"/>
    <property type="match status" value="1"/>
</dbReference>
<dbReference type="Pfam" id="PF02274">
    <property type="entry name" value="ADI"/>
    <property type="match status" value="1"/>
</dbReference>
<dbReference type="PIRSF" id="PIRSF006356">
    <property type="entry name" value="Arg_deiminase"/>
    <property type="match status" value="1"/>
</dbReference>
<dbReference type="PRINTS" id="PR01466">
    <property type="entry name" value="ARGDEIMINASE"/>
</dbReference>
<dbReference type="SUPFAM" id="SSF55909">
    <property type="entry name" value="Pentein"/>
    <property type="match status" value="1"/>
</dbReference>
<feature type="chain" id="PRO_1000078364" description="Arginine deiminase">
    <location>
        <begin position="1"/>
        <end position="410"/>
    </location>
</feature>
<feature type="active site" description="Amidino-cysteine intermediate" evidence="1">
    <location>
        <position position="400"/>
    </location>
</feature>
<gene>
    <name evidence="1" type="primary">arcA</name>
    <name type="ordered locus">LVIS_2027</name>
</gene>
<organism>
    <name type="scientific">Levilactobacillus brevis (strain ATCC 367 / BCRC 12310 / CIP 105137 / JCM 1170 / LMG 11437 / NCIMB 947 / NCTC 947)</name>
    <name type="common">Lactobacillus brevis</name>
    <dbReference type="NCBI Taxonomy" id="387344"/>
    <lineage>
        <taxon>Bacteria</taxon>
        <taxon>Bacillati</taxon>
        <taxon>Bacillota</taxon>
        <taxon>Bacilli</taxon>
        <taxon>Lactobacillales</taxon>
        <taxon>Lactobacillaceae</taxon>
        <taxon>Levilactobacillus</taxon>
    </lineage>
</organism>
<comment type="catalytic activity">
    <reaction evidence="1">
        <text>L-arginine + H2O = L-citrulline + NH4(+)</text>
        <dbReference type="Rhea" id="RHEA:19597"/>
        <dbReference type="ChEBI" id="CHEBI:15377"/>
        <dbReference type="ChEBI" id="CHEBI:28938"/>
        <dbReference type="ChEBI" id="CHEBI:32682"/>
        <dbReference type="ChEBI" id="CHEBI:57743"/>
        <dbReference type="EC" id="3.5.3.6"/>
    </reaction>
</comment>
<comment type="pathway">
    <text evidence="1">Amino-acid degradation; L-arginine degradation via ADI pathway; carbamoyl phosphate from L-arginine: step 1/2.</text>
</comment>
<comment type="subcellular location">
    <subcellularLocation>
        <location evidence="1">Cytoplasm</location>
    </subcellularLocation>
</comment>
<comment type="similarity">
    <text evidence="1">Belongs to the arginine deiminase family.</text>
</comment>
<sequence length="410" mass="45875">MTSPIHVMSEIGKLKTVMLKRPNVEVENFTPDMMERLLFDDIPYLPIAQQEHDNFAETLRQNGTEVLYLEQLSAEALDDGGEEVKLNFLEQMLAESGYVAGVTHDALKEYLLSLDTQAMVNKIMGGVRKNELDFVPADLVSAAEEDDYPFFMDPMPNLYFTRDPAASIGDGLSINHMTFAARQRESLFMETIIKYHHRFANKGLNVWRDRNHDTRIEGGDELVLSDHVLAIGVSQRTSADAIEDIARNLFAKSHFDKVIAIKIPHNHAMMHLDTVFTMINTDQFTVHPGILGEGGHIDTWTITPGKDGQLSLDHQTDLKKVLKDALNLDDLDLIPTGNGDPIIAGREQWNDGSNTLAIAPGVVVTYNRNYVSNELLRKHGLKVIDVLSSELSRGRGGPRCMSMPLVREDL</sequence>
<name>ARCA_LEVBA</name>
<reference key="1">
    <citation type="journal article" date="2006" name="Proc. Natl. Acad. Sci. U.S.A.">
        <title>Comparative genomics of the lactic acid bacteria.</title>
        <authorList>
            <person name="Makarova K.S."/>
            <person name="Slesarev A."/>
            <person name="Wolf Y.I."/>
            <person name="Sorokin A."/>
            <person name="Mirkin B."/>
            <person name="Koonin E.V."/>
            <person name="Pavlov A."/>
            <person name="Pavlova N."/>
            <person name="Karamychev V."/>
            <person name="Polouchine N."/>
            <person name="Shakhova V."/>
            <person name="Grigoriev I."/>
            <person name="Lou Y."/>
            <person name="Rohksar D."/>
            <person name="Lucas S."/>
            <person name="Huang K."/>
            <person name="Goodstein D.M."/>
            <person name="Hawkins T."/>
            <person name="Plengvidhya V."/>
            <person name="Welker D."/>
            <person name="Hughes J."/>
            <person name="Goh Y."/>
            <person name="Benson A."/>
            <person name="Baldwin K."/>
            <person name="Lee J.-H."/>
            <person name="Diaz-Muniz I."/>
            <person name="Dosti B."/>
            <person name="Smeianov V."/>
            <person name="Wechter W."/>
            <person name="Barabote R."/>
            <person name="Lorca G."/>
            <person name="Altermann E."/>
            <person name="Barrangou R."/>
            <person name="Ganesan B."/>
            <person name="Xie Y."/>
            <person name="Rawsthorne H."/>
            <person name="Tamir D."/>
            <person name="Parker C."/>
            <person name="Breidt F."/>
            <person name="Broadbent J.R."/>
            <person name="Hutkins R."/>
            <person name="O'Sullivan D."/>
            <person name="Steele J."/>
            <person name="Unlu G."/>
            <person name="Saier M.H. Jr."/>
            <person name="Klaenhammer T."/>
            <person name="Richardson P."/>
            <person name="Kozyavkin S."/>
            <person name="Weimer B.C."/>
            <person name="Mills D.A."/>
        </authorList>
    </citation>
    <scope>NUCLEOTIDE SEQUENCE [LARGE SCALE GENOMIC DNA]</scope>
    <source>
        <strain>ATCC 367 / BCRC 12310 / CIP 105137 / JCM 1170 / LMG 11437 / NCIMB 947 / NCTC 947</strain>
    </source>
</reference>
<accession>Q03NY8</accession>
<protein>
    <recommendedName>
        <fullName evidence="1">Arginine deiminase</fullName>
        <shortName evidence="1">ADI</shortName>
        <ecNumber evidence="1">3.5.3.6</ecNumber>
    </recommendedName>
    <alternativeName>
        <fullName evidence="1">Arginine dihydrolase</fullName>
        <shortName evidence="1">AD</shortName>
    </alternativeName>
</protein>
<evidence type="ECO:0000255" key="1">
    <source>
        <dbReference type="HAMAP-Rule" id="MF_00242"/>
    </source>
</evidence>
<keyword id="KW-0056">Arginine metabolism</keyword>
<keyword id="KW-0963">Cytoplasm</keyword>
<keyword id="KW-0378">Hydrolase</keyword>
<keyword id="KW-1185">Reference proteome</keyword>